<accession>Q1C231</accession>
<protein>
    <recommendedName>
        <fullName evidence="1">Molybdenum cofactor guanylyltransferase</fullName>
        <shortName evidence="1">MoCo guanylyltransferase</shortName>
        <ecNumber evidence="1">2.7.7.77</ecNumber>
    </recommendedName>
    <alternativeName>
        <fullName evidence="1">GTP:molybdopterin guanylyltransferase</fullName>
    </alternativeName>
    <alternativeName>
        <fullName evidence="1">Mo-MPT guanylyltransferase</fullName>
    </alternativeName>
    <alternativeName>
        <fullName evidence="1">Molybdopterin guanylyltransferase</fullName>
    </alternativeName>
    <alternativeName>
        <fullName evidence="1">Molybdopterin-guanine dinucleotide synthase</fullName>
        <shortName evidence="1">MGD synthase</shortName>
    </alternativeName>
</protein>
<comment type="function">
    <text evidence="1">Transfers a GMP moiety from GTP to Mo-molybdopterin (Mo-MPT) cofactor (Moco or molybdenum cofactor) to form Mo-molybdopterin guanine dinucleotide (Mo-MGD) cofactor.</text>
</comment>
<comment type="catalytic activity">
    <reaction evidence="1">
        <text>Mo-molybdopterin + GTP + H(+) = Mo-molybdopterin guanine dinucleotide + diphosphate</text>
        <dbReference type="Rhea" id="RHEA:34243"/>
        <dbReference type="ChEBI" id="CHEBI:15378"/>
        <dbReference type="ChEBI" id="CHEBI:33019"/>
        <dbReference type="ChEBI" id="CHEBI:37565"/>
        <dbReference type="ChEBI" id="CHEBI:71302"/>
        <dbReference type="ChEBI" id="CHEBI:71310"/>
        <dbReference type="EC" id="2.7.7.77"/>
    </reaction>
</comment>
<comment type="cofactor">
    <cofactor evidence="1">
        <name>Mg(2+)</name>
        <dbReference type="ChEBI" id="CHEBI:18420"/>
    </cofactor>
</comment>
<comment type="subunit">
    <text evidence="1">Monomer.</text>
</comment>
<comment type="subcellular location">
    <subcellularLocation>
        <location evidence="1">Cytoplasm</location>
    </subcellularLocation>
</comment>
<comment type="domain">
    <text evidence="1">The N-terminal domain determines nucleotide recognition and specific binding, while the C-terminal domain determines the specific binding to the target protein.</text>
</comment>
<comment type="similarity">
    <text evidence="1">Belongs to the MobA family.</text>
</comment>
<feature type="chain" id="PRO_1000019165" description="Molybdenum cofactor guanylyltransferase">
    <location>
        <begin position="1"/>
        <end position="195"/>
    </location>
</feature>
<feature type="binding site" evidence="1">
    <location>
        <begin position="10"/>
        <end position="12"/>
    </location>
    <ligand>
        <name>GTP</name>
        <dbReference type="ChEBI" id="CHEBI:37565"/>
    </ligand>
</feature>
<feature type="binding site" evidence="1">
    <location>
        <position position="23"/>
    </location>
    <ligand>
        <name>GTP</name>
        <dbReference type="ChEBI" id="CHEBI:37565"/>
    </ligand>
</feature>
<feature type="binding site" evidence="1">
    <location>
        <position position="51"/>
    </location>
    <ligand>
        <name>GTP</name>
        <dbReference type="ChEBI" id="CHEBI:37565"/>
    </ligand>
</feature>
<feature type="binding site" evidence="1">
    <location>
        <position position="69"/>
    </location>
    <ligand>
        <name>GTP</name>
        <dbReference type="ChEBI" id="CHEBI:37565"/>
    </ligand>
</feature>
<feature type="binding site" evidence="1">
    <location>
        <position position="99"/>
    </location>
    <ligand>
        <name>GTP</name>
        <dbReference type="ChEBI" id="CHEBI:37565"/>
    </ligand>
</feature>
<feature type="binding site" evidence="1">
    <location>
        <position position="99"/>
    </location>
    <ligand>
        <name>Mg(2+)</name>
        <dbReference type="ChEBI" id="CHEBI:18420"/>
    </ligand>
</feature>
<name>MOBA_YERPA</name>
<reference key="1">
    <citation type="journal article" date="2006" name="J. Bacteriol.">
        <title>Complete genome sequence of Yersinia pestis strains Antiqua and Nepal516: evidence of gene reduction in an emerging pathogen.</title>
        <authorList>
            <person name="Chain P.S.G."/>
            <person name="Hu P."/>
            <person name="Malfatti S.A."/>
            <person name="Radnedge L."/>
            <person name="Larimer F."/>
            <person name="Vergez L.M."/>
            <person name="Worsham P."/>
            <person name="Chu M.C."/>
            <person name="Andersen G.L."/>
        </authorList>
    </citation>
    <scope>NUCLEOTIDE SEQUENCE [LARGE SCALE GENOMIC DNA]</scope>
    <source>
        <strain>Antiqua</strain>
    </source>
</reference>
<dbReference type="EC" id="2.7.7.77" evidence="1"/>
<dbReference type="EMBL" id="CP000308">
    <property type="protein sequence ID" value="ABG15491.1"/>
    <property type="molecule type" value="Genomic_DNA"/>
</dbReference>
<dbReference type="RefSeq" id="WP_002213171.1">
    <property type="nucleotide sequence ID" value="NZ_CP009906.1"/>
</dbReference>
<dbReference type="SMR" id="Q1C231"/>
<dbReference type="GeneID" id="57974576"/>
<dbReference type="KEGG" id="ypa:YPA_3529"/>
<dbReference type="Proteomes" id="UP000001971">
    <property type="component" value="Chromosome"/>
</dbReference>
<dbReference type="GO" id="GO:0005737">
    <property type="term" value="C:cytoplasm"/>
    <property type="evidence" value="ECO:0007669"/>
    <property type="project" value="UniProtKB-SubCell"/>
</dbReference>
<dbReference type="GO" id="GO:0005525">
    <property type="term" value="F:GTP binding"/>
    <property type="evidence" value="ECO:0007669"/>
    <property type="project" value="UniProtKB-UniRule"/>
</dbReference>
<dbReference type="GO" id="GO:0046872">
    <property type="term" value="F:metal ion binding"/>
    <property type="evidence" value="ECO:0007669"/>
    <property type="project" value="UniProtKB-KW"/>
</dbReference>
<dbReference type="GO" id="GO:0061603">
    <property type="term" value="F:molybdenum cofactor guanylyltransferase activity"/>
    <property type="evidence" value="ECO:0007669"/>
    <property type="project" value="UniProtKB-EC"/>
</dbReference>
<dbReference type="GO" id="GO:1902758">
    <property type="term" value="P:bis(molybdopterin guanine dinucleotide)molybdenum biosynthetic process"/>
    <property type="evidence" value="ECO:0007669"/>
    <property type="project" value="TreeGrafter"/>
</dbReference>
<dbReference type="CDD" id="cd02503">
    <property type="entry name" value="MobA"/>
    <property type="match status" value="1"/>
</dbReference>
<dbReference type="Gene3D" id="3.90.550.10">
    <property type="entry name" value="Spore Coat Polysaccharide Biosynthesis Protein SpsA, Chain A"/>
    <property type="match status" value="1"/>
</dbReference>
<dbReference type="HAMAP" id="MF_00316">
    <property type="entry name" value="MobA"/>
    <property type="match status" value="1"/>
</dbReference>
<dbReference type="InterPro" id="IPR025877">
    <property type="entry name" value="MobA-like_NTP_Trfase"/>
</dbReference>
<dbReference type="InterPro" id="IPR013482">
    <property type="entry name" value="Molybde_CF_guanTrfase"/>
</dbReference>
<dbReference type="InterPro" id="IPR029044">
    <property type="entry name" value="Nucleotide-diphossugar_trans"/>
</dbReference>
<dbReference type="NCBIfam" id="TIGR02665">
    <property type="entry name" value="molyb_mobA"/>
    <property type="match status" value="1"/>
</dbReference>
<dbReference type="PANTHER" id="PTHR19136">
    <property type="entry name" value="MOLYBDENUM COFACTOR GUANYLYLTRANSFERASE"/>
    <property type="match status" value="1"/>
</dbReference>
<dbReference type="PANTHER" id="PTHR19136:SF81">
    <property type="entry name" value="MOLYBDENUM COFACTOR GUANYLYLTRANSFERASE"/>
    <property type="match status" value="1"/>
</dbReference>
<dbReference type="Pfam" id="PF12804">
    <property type="entry name" value="NTP_transf_3"/>
    <property type="match status" value="1"/>
</dbReference>
<dbReference type="SUPFAM" id="SSF53448">
    <property type="entry name" value="Nucleotide-diphospho-sugar transferases"/>
    <property type="match status" value="1"/>
</dbReference>
<keyword id="KW-0963">Cytoplasm</keyword>
<keyword id="KW-0342">GTP-binding</keyword>
<keyword id="KW-0460">Magnesium</keyword>
<keyword id="KW-0479">Metal-binding</keyword>
<keyword id="KW-0501">Molybdenum cofactor biosynthesis</keyword>
<keyword id="KW-0547">Nucleotide-binding</keyword>
<keyword id="KW-0808">Transferase</keyword>
<organism>
    <name type="scientific">Yersinia pestis bv. Antiqua (strain Antiqua)</name>
    <dbReference type="NCBI Taxonomy" id="360102"/>
    <lineage>
        <taxon>Bacteria</taxon>
        <taxon>Pseudomonadati</taxon>
        <taxon>Pseudomonadota</taxon>
        <taxon>Gammaproteobacteria</taxon>
        <taxon>Enterobacterales</taxon>
        <taxon>Yersiniaceae</taxon>
        <taxon>Yersinia</taxon>
    </lineage>
</organism>
<sequence>MQPNITGVILAGGRSSRMGGNDKGLIPLNGKPLFQYVIDRFKPQVSDLVINANRNQGLYKESGIPVIDDIITGFVGPLAGMHAGLSYASTEWVVFAPCDVPALPSDLVSQLWQGKKQALAAYANDDERAHPTFALMHISLKTQLADYLIRGDRKLMLFLDSINAQRVKFSGKADLFSNLNTPADCDLWEQKRRGQ</sequence>
<proteinExistence type="inferred from homology"/>
<gene>
    <name evidence="1" type="primary">mobA</name>
    <name type="ordered locus">YPA_3529</name>
</gene>
<evidence type="ECO:0000255" key="1">
    <source>
        <dbReference type="HAMAP-Rule" id="MF_00316"/>
    </source>
</evidence>